<dbReference type="EMBL" id="CP000683">
    <property type="protein sequence ID" value="ABV84373.1"/>
    <property type="molecule type" value="Genomic_DNA"/>
</dbReference>
<dbReference type="RefSeq" id="WP_012152354.1">
    <property type="nucleotide sequence ID" value="NC_009900.1"/>
</dbReference>
<dbReference type="SMR" id="A8F0D7"/>
<dbReference type="KEGG" id="rms:RMA_0049"/>
<dbReference type="HOGENOM" id="CLU_057596_1_0_5"/>
<dbReference type="Proteomes" id="UP000001311">
    <property type="component" value="Chromosome"/>
</dbReference>
<dbReference type="GO" id="GO:0005829">
    <property type="term" value="C:cytosol"/>
    <property type="evidence" value="ECO:0007669"/>
    <property type="project" value="TreeGrafter"/>
</dbReference>
<dbReference type="Gene3D" id="3.40.1740.10">
    <property type="entry name" value="VC0467-like"/>
    <property type="match status" value="1"/>
</dbReference>
<dbReference type="HAMAP" id="MF_00758">
    <property type="entry name" value="UPF0301"/>
    <property type="match status" value="1"/>
</dbReference>
<dbReference type="InterPro" id="IPR003774">
    <property type="entry name" value="AlgH-like"/>
</dbReference>
<dbReference type="NCBIfam" id="NF001268">
    <property type="entry name" value="PRK00228.1-4"/>
    <property type="match status" value="1"/>
</dbReference>
<dbReference type="PANTHER" id="PTHR30327">
    <property type="entry name" value="UNCHARACTERIZED PROTEIN YQGE"/>
    <property type="match status" value="1"/>
</dbReference>
<dbReference type="PANTHER" id="PTHR30327:SF1">
    <property type="entry name" value="UPF0301 PROTEIN YQGE"/>
    <property type="match status" value="1"/>
</dbReference>
<dbReference type="Pfam" id="PF02622">
    <property type="entry name" value="DUF179"/>
    <property type="match status" value="1"/>
</dbReference>
<dbReference type="SUPFAM" id="SSF143456">
    <property type="entry name" value="VC0467-like"/>
    <property type="match status" value="1"/>
</dbReference>
<feature type="chain" id="PRO_1000062199" description="UPF0301 protein RMA_0049">
    <location>
        <begin position="1"/>
        <end position="189"/>
    </location>
</feature>
<evidence type="ECO:0000255" key="1">
    <source>
        <dbReference type="HAMAP-Rule" id="MF_00758"/>
    </source>
</evidence>
<name>Y049_RICM5</name>
<protein>
    <recommendedName>
        <fullName evidence="1">UPF0301 protein RMA_0049</fullName>
    </recommendedName>
</protein>
<proteinExistence type="inferred from homology"/>
<sequence>MGDKIFHNLSGKTLVATPHVITKGIYHKSLIYMLSHTEEGAIGLIFNRLVNHIDLKSFFKIKNDKITTPVMVPIYLGGPIEHEKGFFLHSSDYNKNLLLDFHNDLAVSSNLEISEDIAFGKGPKNSLFIVGYTAWKPGQLEEELEKNLWLVMDCNKEFIFADNPESKWHNALKHLGIDEIHFSSQIGNA</sequence>
<comment type="similarity">
    <text evidence="1">Belongs to the UPF0301 (AlgH) family.</text>
</comment>
<organism>
    <name type="scientific">Rickettsia massiliae (strain Mtu5)</name>
    <dbReference type="NCBI Taxonomy" id="416276"/>
    <lineage>
        <taxon>Bacteria</taxon>
        <taxon>Pseudomonadati</taxon>
        <taxon>Pseudomonadota</taxon>
        <taxon>Alphaproteobacteria</taxon>
        <taxon>Rickettsiales</taxon>
        <taxon>Rickettsiaceae</taxon>
        <taxon>Rickettsieae</taxon>
        <taxon>Rickettsia</taxon>
        <taxon>spotted fever group</taxon>
    </lineage>
</organism>
<gene>
    <name type="ordered locus">RMA_0049</name>
</gene>
<accession>A8F0D7</accession>
<reference key="1">
    <citation type="journal article" date="2007" name="Genome Res.">
        <title>Lateral gene transfer between obligate intracellular bacteria: evidence from the Rickettsia massiliae genome.</title>
        <authorList>
            <person name="Blanc G."/>
            <person name="Ogata H."/>
            <person name="Robert C."/>
            <person name="Audic S."/>
            <person name="Claverie J.-M."/>
            <person name="Raoult D."/>
        </authorList>
    </citation>
    <scope>NUCLEOTIDE SEQUENCE [LARGE SCALE GENOMIC DNA]</scope>
    <source>
        <strain>Mtu5</strain>
    </source>
</reference>